<name>NUOA_BACTN</name>
<keyword id="KW-0997">Cell inner membrane</keyword>
<keyword id="KW-1003">Cell membrane</keyword>
<keyword id="KW-0472">Membrane</keyword>
<keyword id="KW-0520">NAD</keyword>
<keyword id="KW-0874">Quinone</keyword>
<keyword id="KW-1185">Reference proteome</keyword>
<keyword id="KW-1278">Translocase</keyword>
<keyword id="KW-0812">Transmembrane</keyword>
<keyword id="KW-1133">Transmembrane helix</keyword>
<keyword id="KW-0813">Transport</keyword>
<organism>
    <name type="scientific">Bacteroides thetaiotaomicron (strain ATCC 29148 / DSM 2079 / JCM 5827 / CCUG 10774 / NCTC 10582 / VPI-5482 / E50)</name>
    <dbReference type="NCBI Taxonomy" id="226186"/>
    <lineage>
        <taxon>Bacteria</taxon>
        <taxon>Pseudomonadati</taxon>
        <taxon>Bacteroidota</taxon>
        <taxon>Bacteroidia</taxon>
        <taxon>Bacteroidales</taxon>
        <taxon>Bacteroidaceae</taxon>
        <taxon>Bacteroides</taxon>
    </lineage>
</organism>
<accession>Q8A0F4</accession>
<gene>
    <name evidence="1" type="primary">nuoA</name>
    <name type="ordered locus">BT_4067</name>
</gene>
<comment type="function">
    <text evidence="1">NDH-1 shuttles electrons from NADH, via FMN and iron-sulfur (Fe-S) centers, to quinones in the respiratory chain. The immediate electron acceptor for the enzyme in this species is believed to be a menaquinone. Couples the redox reaction to proton translocation (for every two electrons transferred, four hydrogen ions are translocated across the cytoplasmic membrane), and thus conserves the redox energy in a proton gradient.</text>
</comment>
<comment type="catalytic activity">
    <reaction evidence="1">
        <text>a quinone + NADH + 5 H(+)(in) = a quinol + NAD(+) + 4 H(+)(out)</text>
        <dbReference type="Rhea" id="RHEA:57888"/>
        <dbReference type="ChEBI" id="CHEBI:15378"/>
        <dbReference type="ChEBI" id="CHEBI:24646"/>
        <dbReference type="ChEBI" id="CHEBI:57540"/>
        <dbReference type="ChEBI" id="CHEBI:57945"/>
        <dbReference type="ChEBI" id="CHEBI:132124"/>
    </reaction>
</comment>
<comment type="subunit">
    <text evidence="1">NDH-1 is composed of 14 different subunits. Subunits NuoA, H, J, K, L, M, N constitute the membrane sector of the complex.</text>
</comment>
<comment type="subcellular location">
    <subcellularLocation>
        <location evidence="1">Cell inner membrane</location>
        <topology evidence="1">Multi-pass membrane protein</topology>
    </subcellularLocation>
</comment>
<comment type="similarity">
    <text evidence="1">Belongs to the complex I subunit 3 family.</text>
</comment>
<reference key="1">
    <citation type="journal article" date="2003" name="Science">
        <title>A genomic view of the human-Bacteroides thetaiotaomicron symbiosis.</title>
        <authorList>
            <person name="Xu J."/>
            <person name="Bjursell M.K."/>
            <person name="Himrod J."/>
            <person name="Deng S."/>
            <person name="Carmichael L.K."/>
            <person name="Chiang H.C."/>
            <person name="Hooper L.V."/>
            <person name="Gordon J.I."/>
        </authorList>
    </citation>
    <scope>NUCLEOTIDE SEQUENCE [LARGE SCALE GENOMIC DNA]</scope>
    <source>
        <strain>ATCC 29148 / DSM 2079 / JCM 5827 / CCUG 10774 / NCTC 10582 / VPI-5482 / E50</strain>
    </source>
</reference>
<feature type="chain" id="PRO_0000362628" description="NADH-quinone oxidoreductase subunit A">
    <location>
        <begin position="1"/>
        <end position="116"/>
    </location>
</feature>
<feature type="transmembrane region" description="Helical" evidence="1">
    <location>
        <begin position="3"/>
        <end position="23"/>
    </location>
</feature>
<feature type="transmembrane region" description="Helical" evidence="1">
    <location>
        <begin position="61"/>
        <end position="81"/>
    </location>
</feature>
<feature type="transmembrane region" description="Helical" evidence="1">
    <location>
        <begin position="88"/>
        <end position="108"/>
    </location>
</feature>
<protein>
    <recommendedName>
        <fullName evidence="1">NADH-quinone oxidoreductase subunit A</fullName>
        <ecNumber evidence="1">7.1.1.-</ecNumber>
    </recommendedName>
    <alternativeName>
        <fullName evidence="1">NADH dehydrogenase I subunit A</fullName>
    </alternativeName>
    <alternativeName>
        <fullName evidence="1">NDH-1 subunit A</fullName>
    </alternativeName>
    <alternativeName>
        <fullName evidence="1">NUO1</fullName>
    </alternativeName>
</protein>
<sequence length="116" mass="13286">MNFTFLVVVLLTALAFVGVVIALSRAISPRSYNVQKFEAYECGIPTRGKSWMQFRVGYYLFAILFLMFDVETAFLFPWAVVMHDMGPQGLVSILFFFIILVLGLAYAWRKGALEWK</sequence>
<dbReference type="EC" id="7.1.1.-" evidence="1"/>
<dbReference type="EMBL" id="AE015928">
    <property type="protein sequence ID" value="AAO79172.1"/>
    <property type="molecule type" value="Genomic_DNA"/>
</dbReference>
<dbReference type="RefSeq" id="NP_812978.1">
    <property type="nucleotide sequence ID" value="NC_004663.1"/>
</dbReference>
<dbReference type="RefSeq" id="WP_008760952.1">
    <property type="nucleotide sequence ID" value="NZ_UYXG01000005.1"/>
</dbReference>
<dbReference type="SMR" id="Q8A0F4"/>
<dbReference type="FunCoup" id="Q8A0F4">
    <property type="interactions" value="164"/>
</dbReference>
<dbReference type="STRING" id="226186.BT_4067"/>
<dbReference type="PaxDb" id="226186-BT_4067"/>
<dbReference type="DNASU" id="1073431"/>
<dbReference type="EnsemblBacteria" id="AAO79172">
    <property type="protein sequence ID" value="AAO79172"/>
    <property type="gene ID" value="BT_4067"/>
</dbReference>
<dbReference type="KEGG" id="bth:BT_4067"/>
<dbReference type="PATRIC" id="fig|226186.12.peg.4132"/>
<dbReference type="eggNOG" id="COG0838">
    <property type="taxonomic scope" value="Bacteria"/>
</dbReference>
<dbReference type="HOGENOM" id="CLU_119549_1_2_10"/>
<dbReference type="InParanoid" id="Q8A0F4"/>
<dbReference type="OrthoDB" id="9791970at2"/>
<dbReference type="Proteomes" id="UP000001414">
    <property type="component" value="Chromosome"/>
</dbReference>
<dbReference type="GO" id="GO:0030964">
    <property type="term" value="C:NADH dehydrogenase complex"/>
    <property type="evidence" value="ECO:0000318"/>
    <property type="project" value="GO_Central"/>
</dbReference>
<dbReference type="GO" id="GO:0005886">
    <property type="term" value="C:plasma membrane"/>
    <property type="evidence" value="ECO:0007669"/>
    <property type="project" value="UniProtKB-SubCell"/>
</dbReference>
<dbReference type="GO" id="GO:0008137">
    <property type="term" value="F:NADH dehydrogenase (ubiquinone) activity"/>
    <property type="evidence" value="ECO:0000318"/>
    <property type="project" value="GO_Central"/>
</dbReference>
<dbReference type="GO" id="GO:0050136">
    <property type="term" value="F:NADH:ubiquinone reductase (non-electrogenic) activity"/>
    <property type="evidence" value="ECO:0007669"/>
    <property type="project" value="UniProtKB-UniRule"/>
</dbReference>
<dbReference type="GO" id="GO:0048038">
    <property type="term" value="F:quinone binding"/>
    <property type="evidence" value="ECO:0007669"/>
    <property type="project" value="UniProtKB-KW"/>
</dbReference>
<dbReference type="FunFam" id="1.20.58.1610:FF:000008">
    <property type="entry name" value="NADH-quinone oxidoreductase subunit A"/>
    <property type="match status" value="1"/>
</dbReference>
<dbReference type="Gene3D" id="1.20.58.1610">
    <property type="entry name" value="NADH:ubiquinone/plastoquinone oxidoreductase, chain 3"/>
    <property type="match status" value="1"/>
</dbReference>
<dbReference type="HAMAP" id="MF_01394">
    <property type="entry name" value="NDH1_NuoA"/>
    <property type="match status" value="1"/>
</dbReference>
<dbReference type="InterPro" id="IPR023043">
    <property type="entry name" value="NAD(P)H_OxRDtase_bac/plastid"/>
</dbReference>
<dbReference type="InterPro" id="IPR000440">
    <property type="entry name" value="NADH_UbQ/plastoQ_OxRdtase_su3"/>
</dbReference>
<dbReference type="InterPro" id="IPR038430">
    <property type="entry name" value="NDAH_ubi_oxred_su3_sf"/>
</dbReference>
<dbReference type="PANTHER" id="PTHR11058:SF22">
    <property type="entry name" value="NADH-QUINONE OXIDOREDUCTASE SUBUNIT A"/>
    <property type="match status" value="1"/>
</dbReference>
<dbReference type="PANTHER" id="PTHR11058">
    <property type="entry name" value="NADH-UBIQUINONE OXIDOREDUCTASE CHAIN 3"/>
    <property type="match status" value="1"/>
</dbReference>
<dbReference type="Pfam" id="PF00507">
    <property type="entry name" value="Oxidored_q4"/>
    <property type="match status" value="1"/>
</dbReference>
<evidence type="ECO:0000255" key="1">
    <source>
        <dbReference type="HAMAP-Rule" id="MF_01394"/>
    </source>
</evidence>
<proteinExistence type="inferred from homology"/>